<sequence>MARCPACASPRTVFHEELGTLSIAHMDCDAFYASVEKRDDPSLRDLPVIIGGGKRGVVTTACYIARMSGAKSAMPMFKALKLCPDAVVIKPNFAKYKEESRRIHEKLDRLTPLIQPLSLDEAWIDLTGTERLHGATPAQMLARLQAEIERDIGLTVSVGLAPNKFLAKIASELDKPRGFSAIGAAEAQSFLANKPVNILPGVGPATVASLAEIGLRTVGDIAAADLKLLANRLGSGGMRLHRLAHGQDSRIVDPDQARKTISAETTFNDDLHKREDLEDELWPLCEKVAKQARQEGVAGRVATLKLRTPDFKIHTRRRTLAVPTQTARTLFQVARELLSAEPRGLAYRLIGAGLTEFVDADTAGADMFADEERRALKSETAIDALRGKFGAAAVVTGRALKGR</sequence>
<organism>
    <name type="scientific">Caulobacter vibrioides (strain ATCC 19089 / CIP 103742 / CB 15)</name>
    <name type="common">Caulobacter crescentus</name>
    <dbReference type="NCBI Taxonomy" id="190650"/>
    <lineage>
        <taxon>Bacteria</taxon>
        <taxon>Pseudomonadati</taxon>
        <taxon>Pseudomonadota</taxon>
        <taxon>Alphaproteobacteria</taxon>
        <taxon>Caulobacterales</taxon>
        <taxon>Caulobacteraceae</taxon>
        <taxon>Caulobacter</taxon>
    </lineage>
</organism>
<proteinExistence type="inferred from homology"/>
<evidence type="ECO:0000255" key="1">
    <source>
        <dbReference type="HAMAP-Rule" id="MF_01113"/>
    </source>
</evidence>
<evidence type="ECO:0000305" key="2"/>
<protein>
    <recommendedName>
        <fullName evidence="1">DNA polymerase IV</fullName>
        <shortName evidence="1">Pol IV</shortName>
        <ecNumber evidence="1">2.7.7.7</ecNumber>
    </recommendedName>
</protein>
<keyword id="KW-0963">Cytoplasm</keyword>
<keyword id="KW-0227">DNA damage</keyword>
<keyword id="KW-0234">DNA repair</keyword>
<keyword id="KW-0235">DNA replication</keyword>
<keyword id="KW-0238">DNA-binding</keyword>
<keyword id="KW-0239">DNA-directed DNA polymerase</keyword>
<keyword id="KW-0460">Magnesium</keyword>
<keyword id="KW-0479">Metal-binding</keyword>
<keyword id="KW-0515">Mutator protein</keyword>
<keyword id="KW-0548">Nucleotidyltransferase</keyword>
<keyword id="KW-1185">Reference proteome</keyword>
<keyword id="KW-0808">Transferase</keyword>
<gene>
    <name evidence="1" type="primary">dinB</name>
    <name type="ordered locus">CC_2466</name>
</gene>
<reference key="1">
    <citation type="journal article" date="2001" name="Proc. Natl. Acad. Sci. U.S.A.">
        <title>Complete genome sequence of Caulobacter crescentus.</title>
        <authorList>
            <person name="Nierman W.C."/>
            <person name="Feldblyum T.V."/>
            <person name="Laub M.T."/>
            <person name="Paulsen I.T."/>
            <person name="Nelson K.E."/>
            <person name="Eisen J.A."/>
            <person name="Heidelberg J.F."/>
            <person name="Alley M.R.K."/>
            <person name="Ohta N."/>
            <person name="Maddock J.R."/>
            <person name="Potocka I."/>
            <person name="Nelson W.C."/>
            <person name="Newton A."/>
            <person name="Stephens C."/>
            <person name="Phadke N.D."/>
            <person name="Ely B."/>
            <person name="DeBoy R.T."/>
            <person name="Dodson R.J."/>
            <person name="Durkin A.S."/>
            <person name="Gwinn M.L."/>
            <person name="Haft D.H."/>
            <person name="Kolonay J.F."/>
            <person name="Smit J."/>
            <person name="Craven M.B."/>
            <person name="Khouri H.M."/>
            <person name="Shetty J."/>
            <person name="Berry K.J."/>
            <person name="Utterback T.R."/>
            <person name="Tran K."/>
            <person name="Wolf A.M."/>
            <person name="Vamathevan J.J."/>
            <person name="Ermolaeva M.D."/>
            <person name="White O."/>
            <person name="Salzberg S.L."/>
            <person name="Venter J.C."/>
            <person name="Shapiro L."/>
            <person name="Fraser C.M."/>
        </authorList>
    </citation>
    <scope>NUCLEOTIDE SEQUENCE [LARGE SCALE GENOMIC DNA]</scope>
    <source>
        <strain>ATCC 19089 / CIP 103742 / CB 15</strain>
    </source>
</reference>
<dbReference type="EC" id="2.7.7.7" evidence="1"/>
<dbReference type="EMBL" id="AE005673">
    <property type="protein sequence ID" value="AAK24437.1"/>
    <property type="status" value="ALT_INIT"/>
    <property type="molecule type" value="Genomic_DNA"/>
</dbReference>
<dbReference type="PIR" id="A87555">
    <property type="entry name" value="A87555"/>
</dbReference>
<dbReference type="RefSeq" id="NP_421269.1">
    <property type="nucleotide sequence ID" value="NC_002696.2"/>
</dbReference>
<dbReference type="RefSeq" id="WP_010920324.1">
    <property type="nucleotide sequence ID" value="NC_002696.2"/>
</dbReference>
<dbReference type="SMR" id="Q9A5I1"/>
<dbReference type="STRING" id="190650.CC_2466"/>
<dbReference type="EnsemblBacteria" id="AAK24437">
    <property type="protein sequence ID" value="AAK24437"/>
    <property type="gene ID" value="CC_2466"/>
</dbReference>
<dbReference type="KEGG" id="ccr:CC_2466"/>
<dbReference type="PATRIC" id="fig|190650.5.peg.2483"/>
<dbReference type="eggNOG" id="COG0389">
    <property type="taxonomic scope" value="Bacteria"/>
</dbReference>
<dbReference type="HOGENOM" id="CLU_012348_1_0_5"/>
<dbReference type="Proteomes" id="UP000001816">
    <property type="component" value="Chromosome"/>
</dbReference>
<dbReference type="GO" id="GO:0005829">
    <property type="term" value="C:cytosol"/>
    <property type="evidence" value="ECO:0007669"/>
    <property type="project" value="TreeGrafter"/>
</dbReference>
<dbReference type="GO" id="GO:0003684">
    <property type="term" value="F:damaged DNA binding"/>
    <property type="evidence" value="ECO:0007669"/>
    <property type="project" value="InterPro"/>
</dbReference>
<dbReference type="GO" id="GO:0003887">
    <property type="term" value="F:DNA-directed DNA polymerase activity"/>
    <property type="evidence" value="ECO:0007669"/>
    <property type="project" value="UniProtKB-UniRule"/>
</dbReference>
<dbReference type="GO" id="GO:0000287">
    <property type="term" value="F:magnesium ion binding"/>
    <property type="evidence" value="ECO:0007669"/>
    <property type="project" value="UniProtKB-UniRule"/>
</dbReference>
<dbReference type="GO" id="GO:0006261">
    <property type="term" value="P:DNA-templated DNA replication"/>
    <property type="evidence" value="ECO:0007669"/>
    <property type="project" value="UniProtKB-UniRule"/>
</dbReference>
<dbReference type="GO" id="GO:0042276">
    <property type="term" value="P:error-prone translesion synthesis"/>
    <property type="evidence" value="ECO:0007669"/>
    <property type="project" value="TreeGrafter"/>
</dbReference>
<dbReference type="GO" id="GO:0009432">
    <property type="term" value="P:SOS response"/>
    <property type="evidence" value="ECO:0007669"/>
    <property type="project" value="TreeGrafter"/>
</dbReference>
<dbReference type="CDD" id="cd03586">
    <property type="entry name" value="PolY_Pol_IV_kappa"/>
    <property type="match status" value="1"/>
</dbReference>
<dbReference type="FunFam" id="3.30.1490.100:FF:000004">
    <property type="entry name" value="DNA polymerase IV"/>
    <property type="match status" value="1"/>
</dbReference>
<dbReference type="FunFam" id="3.40.1170.60:FF:000001">
    <property type="entry name" value="DNA polymerase IV"/>
    <property type="match status" value="1"/>
</dbReference>
<dbReference type="Gene3D" id="3.30.70.270">
    <property type="match status" value="1"/>
</dbReference>
<dbReference type="Gene3D" id="3.40.1170.60">
    <property type="match status" value="1"/>
</dbReference>
<dbReference type="Gene3D" id="1.10.150.20">
    <property type="entry name" value="5' to 3' exonuclease, C-terminal subdomain"/>
    <property type="match status" value="1"/>
</dbReference>
<dbReference type="Gene3D" id="3.30.1490.100">
    <property type="entry name" value="DNA polymerase, Y-family, little finger domain"/>
    <property type="match status" value="1"/>
</dbReference>
<dbReference type="HAMAP" id="MF_01113">
    <property type="entry name" value="DNApol_IV"/>
    <property type="match status" value="1"/>
</dbReference>
<dbReference type="InterPro" id="IPR043502">
    <property type="entry name" value="DNA/RNA_pol_sf"/>
</dbReference>
<dbReference type="InterPro" id="IPR036775">
    <property type="entry name" value="DNA_pol_Y-fam_lit_finger_sf"/>
</dbReference>
<dbReference type="InterPro" id="IPR017961">
    <property type="entry name" value="DNA_pol_Y-fam_little_finger"/>
</dbReference>
<dbReference type="InterPro" id="IPR050116">
    <property type="entry name" value="DNA_polymerase-Y"/>
</dbReference>
<dbReference type="InterPro" id="IPR022880">
    <property type="entry name" value="DNApol_IV"/>
</dbReference>
<dbReference type="InterPro" id="IPR053848">
    <property type="entry name" value="IMS_HHH_1"/>
</dbReference>
<dbReference type="InterPro" id="IPR043128">
    <property type="entry name" value="Rev_trsase/Diguanyl_cyclase"/>
</dbReference>
<dbReference type="InterPro" id="IPR001126">
    <property type="entry name" value="UmuC"/>
</dbReference>
<dbReference type="NCBIfam" id="NF002677">
    <property type="entry name" value="PRK02406.1"/>
    <property type="match status" value="1"/>
</dbReference>
<dbReference type="NCBIfam" id="NF002751">
    <property type="entry name" value="PRK02794.1"/>
    <property type="match status" value="1"/>
</dbReference>
<dbReference type="PANTHER" id="PTHR11076:SF33">
    <property type="entry name" value="DNA POLYMERASE KAPPA"/>
    <property type="match status" value="1"/>
</dbReference>
<dbReference type="PANTHER" id="PTHR11076">
    <property type="entry name" value="DNA REPAIR POLYMERASE UMUC / TRANSFERASE FAMILY MEMBER"/>
    <property type="match status" value="1"/>
</dbReference>
<dbReference type="Pfam" id="PF00817">
    <property type="entry name" value="IMS"/>
    <property type="match status" value="1"/>
</dbReference>
<dbReference type="Pfam" id="PF11799">
    <property type="entry name" value="IMS_C"/>
    <property type="match status" value="1"/>
</dbReference>
<dbReference type="Pfam" id="PF21999">
    <property type="entry name" value="IMS_HHH_1"/>
    <property type="match status" value="1"/>
</dbReference>
<dbReference type="SUPFAM" id="SSF56672">
    <property type="entry name" value="DNA/RNA polymerases"/>
    <property type="match status" value="1"/>
</dbReference>
<dbReference type="SUPFAM" id="SSF100879">
    <property type="entry name" value="Lesion bypass DNA polymerase (Y-family), little finger domain"/>
    <property type="match status" value="1"/>
</dbReference>
<dbReference type="PROSITE" id="PS50173">
    <property type="entry name" value="UMUC"/>
    <property type="match status" value="1"/>
</dbReference>
<name>DPO4_CAUVC</name>
<accession>Q9A5I1</accession>
<comment type="function">
    <text evidence="1">Poorly processive, error-prone DNA polymerase involved in untargeted mutagenesis. Copies undamaged DNA at stalled replication forks, which arise in vivo from mismatched or misaligned primer ends. These misaligned primers can be extended by PolIV. Exhibits no 3'-5' exonuclease (proofreading) activity. May be involved in translesional synthesis, in conjunction with the beta clamp from PolIII.</text>
</comment>
<comment type="catalytic activity">
    <reaction evidence="1">
        <text>DNA(n) + a 2'-deoxyribonucleoside 5'-triphosphate = DNA(n+1) + diphosphate</text>
        <dbReference type="Rhea" id="RHEA:22508"/>
        <dbReference type="Rhea" id="RHEA-COMP:17339"/>
        <dbReference type="Rhea" id="RHEA-COMP:17340"/>
        <dbReference type="ChEBI" id="CHEBI:33019"/>
        <dbReference type="ChEBI" id="CHEBI:61560"/>
        <dbReference type="ChEBI" id="CHEBI:173112"/>
        <dbReference type="EC" id="2.7.7.7"/>
    </reaction>
</comment>
<comment type="cofactor">
    <cofactor evidence="1">
        <name>Mg(2+)</name>
        <dbReference type="ChEBI" id="CHEBI:18420"/>
    </cofactor>
    <text evidence="1">Binds 2 magnesium ions per subunit.</text>
</comment>
<comment type="subunit">
    <text evidence="1">Monomer.</text>
</comment>
<comment type="subcellular location">
    <subcellularLocation>
        <location evidence="1">Cytoplasm</location>
    </subcellularLocation>
</comment>
<comment type="similarity">
    <text evidence="1">Belongs to the DNA polymerase type-Y family.</text>
</comment>
<comment type="sequence caution" evidence="2">
    <conflict type="erroneous initiation">
        <sequence resource="EMBL-CDS" id="AAK24437"/>
    </conflict>
</comment>
<feature type="chain" id="PRO_0000173908" description="DNA polymerase IV">
    <location>
        <begin position="1"/>
        <end position="403"/>
    </location>
</feature>
<feature type="domain" description="UmuC" evidence="1">
    <location>
        <begin position="23"/>
        <end position="203"/>
    </location>
</feature>
<feature type="active site" evidence="1">
    <location>
        <position position="121"/>
    </location>
</feature>
<feature type="binding site" evidence="1">
    <location>
        <position position="27"/>
    </location>
    <ligand>
        <name>Mg(2+)</name>
        <dbReference type="ChEBI" id="CHEBI:18420"/>
    </ligand>
</feature>
<feature type="binding site" evidence="1">
    <location>
        <position position="120"/>
    </location>
    <ligand>
        <name>Mg(2+)</name>
        <dbReference type="ChEBI" id="CHEBI:18420"/>
    </ligand>
</feature>
<feature type="site" description="Substrate discrimination" evidence="1">
    <location>
        <position position="32"/>
    </location>
</feature>